<proteinExistence type="inferred from homology"/>
<name>MASZ_NOCFA</name>
<gene>
    <name evidence="1" type="primary">glcB</name>
    <name type="ordered locus">NFA_25030</name>
</gene>
<comment type="function">
    <text evidence="1">Involved in the glycolate utilization. Catalyzes the condensation and subsequent hydrolysis of acetyl-coenzyme A (acetyl-CoA) and glyoxylate to form malate and CoA.</text>
</comment>
<comment type="catalytic activity">
    <reaction evidence="1">
        <text>glyoxylate + acetyl-CoA + H2O = (S)-malate + CoA + H(+)</text>
        <dbReference type="Rhea" id="RHEA:18181"/>
        <dbReference type="ChEBI" id="CHEBI:15377"/>
        <dbReference type="ChEBI" id="CHEBI:15378"/>
        <dbReference type="ChEBI" id="CHEBI:15589"/>
        <dbReference type="ChEBI" id="CHEBI:36655"/>
        <dbReference type="ChEBI" id="CHEBI:57287"/>
        <dbReference type="ChEBI" id="CHEBI:57288"/>
        <dbReference type="EC" id="2.3.3.9"/>
    </reaction>
</comment>
<comment type="cofactor">
    <cofactor evidence="1">
        <name>Mg(2+)</name>
        <dbReference type="ChEBI" id="CHEBI:18420"/>
    </cofactor>
</comment>
<comment type="pathway">
    <text evidence="1">Carbohydrate metabolism; glyoxylate cycle; (S)-malate from isocitrate: step 2/2.</text>
</comment>
<comment type="subunit">
    <text evidence="1">Monomer.</text>
</comment>
<comment type="subcellular location">
    <subcellularLocation>
        <location evidence="1">Cytoplasm</location>
    </subcellularLocation>
</comment>
<comment type="similarity">
    <text evidence="1">Belongs to the malate synthase family. GlcB subfamily.</text>
</comment>
<reference key="1">
    <citation type="journal article" date="2004" name="Proc. Natl. Acad. Sci. U.S.A.">
        <title>The complete genomic sequence of Nocardia farcinica IFM 10152.</title>
        <authorList>
            <person name="Ishikawa J."/>
            <person name="Yamashita A."/>
            <person name="Mikami Y."/>
            <person name="Hoshino Y."/>
            <person name="Kurita H."/>
            <person name="Hotta K."/>
            <person name="Shiba T."/>
            <person name="Hattori M."/>
        </authorList>
    </citation>
    <scope>NUCLEOTIDE SEQUENCE [LARGE SCALE GENOMIC DNA]</scope>
    <source>
        <strain>IFM 10152</strain>
    </source>
</reference>
<feature type="chain" id="PRO_1000056915" description="Malate synthase G">
    <location>
        <begin position="1"/>
        <end position="726"/>
    </location>
</feature>
<feature type="active site" description="Proton acceptor" evidence="1">
    <location>
        <position position="340"/>
    </location>
</feature>
<feature type="active site" description="Proton donor" evidence="1">
    <location>
        <position position="632"/>
    </location>
</feature>
<feature type="binding site" evidence="1">
    <location>
        <position position="118"/>
    </location>
    <ligand>
        <name>acetyl-CoA</name>
        <dbReference type="ChEBI" id="CHEBI:57288"/>
    </ligand>
</feature>
<feature type="binding site" evidence="1">
    <location>
        <begin position="125"/>
        <end position="126"/>
    </location>
    <ligand>
        <name>acetyl-CoA</name>
        <dbReference type="ChEBI" id="CHEBI:57288"/>
    </ligand>
</feature>
<feature type="binding site" evidence="1">
    <location>
        <position position="276"/>
    </location>
    <ligand>
        <name>acetyl-CoA</name>
        <dbReference type="ChEBI" id="CHEBI:57288"/>
    </ligand>
</feature>
<feature type="binding site" evidence="1">
    <location>
        <position position="313"/>
    </location>
    <ligand>
        <name>acetyl-CoA</name>
        <dbReference type="ChEBI" id="CHEBI:57288"/>
    </ligand>
</feature>
<feature type="binding site" evidence="1">
    <location>
        <position position="340"/>
    </location>
    <ligand>
        <name>glyoxylate</name>
        <dbReference type="ChEBI" id="CHEBI:36655"/>
    </ligand>
</feature>
<feature type="binding site" evidence="1">
    <location>
        <position position="432"/>
    </location>
    <ligand>
        <name>glyoxylate</name>
        <dbReference type="ChEBI" id="CHEBI:36655"/>
    </ligand>
</feature>
<feature type="binding site" evidence="1">
    <location>
        <position position="432"/>
    </location>
    <ligand>
        <name>Mg(2+)</name>
        <dbReference type="ChEBI" id="CHEBI:18420"/>
    </ligand>
</feature>
<feature type="binding site" evidence="1">
    <location>
        <begin position="457"/>
        <end position="460"/>
    </location>
    <ligand>
        <name>glyoxylate</name>
        <dbReference type="ChEBI" id="CHEBI:36655"/>
    </ligand>
</feature>
<feature type="binding site" evidence="1">
    <location>
        <position position="460"/>
    </location>
    <ligand>
        <name>Mg(2+)</name>
        <dbReference type="ChEBI" id="CHEBI:18420"/>
    </ligand>
</feature>
<feature type="binding site" evidence="1">
    <location>
        <position position="541"/>
    </location>
    <ligand>
        <name>acetyl-CoA</name>
        <dbReference type="ChEBI" id="CHEBI:57288"/>
    </ligand>
</feature>
<feature type="modified residue" description="Cysteine sulfenic acid (-SOH)" evidence="1">
    <location>
        <position position="618"/>
    </location>
</feature>
<evidence type="ECO:0000255" key="1">
    <source>
        <dbReference type="HAMAP-Rule" id="MF_00641"/>
    </source>
</evidence>
<dbReference type="EC" id="2.3.3.9" evidence="1"/>
<dbReference type="EMBL" id="AP006618">
    <property type="protein sequence ID" value="BAD57350.1"/>
    <property type="molecule type" value="Genomic_DNA"/>
</dbReference>
<dbReference type="RefSeq" id="WP_011209035.1">
    <property type="nucleotide sequence ID" value="NC_006361.1"/>
</dbReference>
<dbReference type="SMR" id="Q5YWU1"/>
<dbReference type="STRING" id="247156.NFA_25030"/>
<dbReference type="GeneID" id="61133251"/>
<dbReference type="KEGG" id="nfa:NFA_25030"/>
<dbReference type="eggNOG" id="COG2225">
    <property type="taxonomic scope" value="Bacteria"/>
</dbReference>
<dbReference type="HOGENOM" id="CLU_028446_1_0_11"/>
<dbReference type="OrthoDB" id="9762054at2"/>
<dbReference type="UniPathway" id="UPA00703">
    <property type="reaction ID" value="UER00720"/>
</dbReference>
<dbReference type="Proteomes" id="UP000006820">
    <property type="component" value="Chromosome"/>
</dbReference>
<dbReference type="GO" id="GO:0005829">
    <property type="term" value="C:cytosol"/>
    <property type="evidence" value="ECO:0007669"/>
    <property type="project" value="TreeGrafter"/>
</dbReference>
<dbReference type="GO" id="GO:0000287">
    <property type="term" value="F:magnesium ion binding"/>
    <property type="evidence" value="ECO:0007669"/>
    <property type="project" value="TreeGrafter"/>
</dbReference>
<dbReference type="GO" id="GO:0004474">
    <property type="term" value="F:malate synthase activity"/>
    <property type="evidence" value="ECO:0007669"/>
    <property type="project" value="UniProtKB-UniRule"/>
</dbReference>
<dbReference type="GO" id="GO:0009436">
    <property type="term" value="P:glyoxylate catabolic process"/>
    <property type="evidence" value="ECO:0007669"/>
    <property type="project" value="TreeGrafter"/>
</dbReference>
<dbReference type="GO" id="GO:0006097">
    <property type="term" value="P:glyoxylate cycle"/>
    <property type="evidence" value="ECO:0007669"/>
    <property type="project" value="UniProtKB-UniRule"/>
</dbReference>
<dbReference type="GO" id="GO:0006099">
    <property type="term" value="P:tricarboxylic acid cycle"/>
    <property type="evidence" value="ECO:0007669"/>
    <property type="project" value="UniProtKB-KW"/>
</dbReference>
<dbReference type="CDD" id="cd00728">
    <property type="entry name" value="malate_synt_G"/>
    <property type="match status" value="1"/>
</dbReference>
<dbReference type="FunFam" id="3.20.20.360:FF:000002">
    <property type="entry name" value="Malate synthase G"/>
    <property type="match status" value="1"/>
</dbReference>
<dbReference type="Gene3D" id="3.20.20.360">
    <property type="entry name" value="Malate synthase, domain 3"/>
    <property type="match status" value="2"/>
</dbReference>
<dbReference type="Gene3D" id="1.20.1220.12">
    <property type="entry name" value="Malate synthase, domain III"/>
    <property type="match status" value="1"/>
</dbReference>
<dbReference type="HAMAP" id="MF_00641">
    <property type="entry name" value="Malate_synth_G"/>
    <property type="match status" value="1"/>
</dbReference>
<dbReference type="InterPro" id="IPR044856">
    <property type="entry name" value="Malate_synth_C_sf"/>
</dbReference>
<dbReference type="InterPro" id="IPR011076">
    <property type="entry name" value="Malate_synth_sf"/>
</dbReference>
<dbReference type="InterPro" id="IPR001465">
    <property type="entry name" value="Malate_synthase_TIM"/>
</dbReference>
<dbReference type="InterPro" id="IPR006253">
    <property type="entry name" value="Malate_synthG"/>
</dbReference>
<dbReference type="InterPro" id="IPR048355">
    <property type="entry name" value="MS_C"/>
</dbReference>
<dbReference type="InterPro" id="IPR048356">
    <property type="entry name" value="MS_N"/>
</dbReference>
<dbReference type="InterPro" id="IPR046363">
    <property type="entry name" value="MS_N_TIM-barrel_dom"/>
</dbReference>
<dbReference type="InterPro" id="IPR048357">
    <property type="entry name" value="MSG_insertion"/>
</dbReference>
<dbReference type="NCBIfam" id="TIGR01345">
    <property type="entry name" value="malate_syn_G"/>
    <property type="match status" value="1"/>
</dbReference>
<dbReference type="NCBIfam" id="NF002825">
    <property type="entry name" value="PRK02999.1"/>
    <property type="match status" value="1"/>
</dbReference>
<dbReference type="PANTHER" id="PTHR42739">
    <property type="entry name" value="MALATE SYNTHASE G"/>
    <property type="match status" value="1"/>
</dbReference>
<dbReference type="PANTHER" id="PTHR42739:SF1">
    <property type="entry name" value="MALATE SYNTHASE G"/>
    <property type="match status" value="1"/>
</dbReference>
<dbReference type="Pfam" id="PF20659">
    <property type="entry name" value="MS_C"/>
    <property type="match status" value="1"/>
</dbReference>
<dbReference type="Pfam" id="PF20656">
    <property type="entry name" value="MS_N"/>
    <property type="match status" value="1"/>
</dbReference>
<dbReference type="Pfam" id="PF01274">
    <property type="entry name" value="MS_TIM-barrel"/>
    <property type="match status" value="1"/>
</dbReference>
<dbReference type="Pfam" id="PF20658">
    <property type="entry name" value="MSG_insertion"/>
    <property type="match status" value="1"/>
</dbReference>
<dbReference type="SUPFAM" id="SSF51645">
    <property type="entry name" value="Malate synthase G"/>
    <property type="match status" value="1"/>
</dbReference>
<accession>Q5YWU1</accession>
<sequence length="726" mass="79260">MTERIQVGGLQVAKVLHDFIENEALPGSGVDSAAFWAGAEQVITDLAPRNRALLAERDEIQGKLDAWHAEHPGANYDKAAYKSFLTEIGYLRPEPADFQITTQNVDSEIAETAGPQLVVPVMNARFAINAANARWGSLYDALYGTDAIPEDNGAEKGTGYNKVRGDKVIEWARNFLDDAVTLITGSHIGSTSYAIVDGELEVGLEDGTTIGLADASQLVGYQGDPAKPTSILLKHNGLHIDIQIDPESPIGSTDTAGIKDIVLESAVTTIMDFEDSVAAVDAEDKVLCYHNWLGLMQGTLAEEVSKGGKTFTRTMNPDRVYTALDGSELRLHGRSLLFVRNVGHLMTSDAILDAQGNEVPEGIMDGLITSLIAKHSLREDVELKNSRTGSVYIVKPKMHGPDEVAFTNELFGRIEDVLGLARNTLKVGIMDEERRTTVNLKACIEAAKERVVFINTGFLDRTGDEIHTSMEAGPMVRKADMKSQQWIASYEDWNVDTGLATGLPGKAQIGKGMWAMPDLMADMLAQKIGHPKSGANTAWVPSPTAATLHATHYHLVDVFKRQAEIAKGGRRASVDEILEIPLAANPNWSPEEIRQELDNNSQSILGYVVRWIDQGVGCSKVPDIKDVALMEDRATLRISSQLMANWLRHGIVTADEVVASLERMAPVVDRQNAGDPNYRPMAPDFDGSIAFQAAKELILEGTKQPNGYTEPILHRRRREAKALSRV</sequence>
<protein>
    <recommendedName>
        <fullName evidence="1">Malate synthase G</fullName>
        <ecNumber evidence="1">2.3.3.9</ecNumber>
    </recommendedName>
</protein>
<keyword id="KW-0963">Cytoplasm</keyword>
<keyword id="KW-0329">Glyoxylate bypass</keyword>
<keyword id="KW-0460">Magnesium</keyword>
<keyword id="KW-0479">Metal-binding</keyword>
<keyword id="KW-0558">Oxidation</keyword>
<keyword id="KW-1185">Reference proteome</keyword>
<keyword id="KW-0808">Transferase</keyword>
<keyword id="KW-0816">Tricarboxylic acid cycle</keyword>
<organism>
    <name type="scientific">Nocardia farcinica (strain IFM 10152)</name>
    <dbReference type="NCBI Taxonomy" id="247156"/>
    <lineage>
        <taxon>Bacteria</taxon>
        <taxon>Bacillati</taxon>
        <taxon>Actinomycetota</taxon>
        <taxon>Actinomycetes</taxon>
        <taxon>Mycobacteriales</taxon>
        <taxon>Nocardiaceae</taxon>
        <taxon>Nocardia</taxon>
    </lineage>
</organism>